<dbReference type="EC" id="3.1.1.1" evidence="4"/>
<dbReference type="EMBL" id="HG970333">
    <property type="protein sequence ID" value="CEF78413.1"/>
    <property type="molecule type" value="Genomic_DNA"/>
</dbReference>
<dbReference type="RefSeq" id="XP_011322122.1">
    <property type="nucleotide sequence ID" value="XM_011323820.1"/>
</dbReference>
<dbReference type="SMR" id="I1RIF1"/>
<dbReference type="ESTHER" id="gibze-b1pdn0">
    <property type="family name" value="Fungal_carboxylesterase_lipase"/>
</dbReference>
<dbReference type="KEGG" id="fgr:FGSG_03583"/>
<dbReference type="VEuPathDB" id="FungiDB:FGRAMPH1_01G13219"/>
<dbReference type="eggNOG" id="KOG4389">
    <property type="taxonomic scope" value="Eukaryota"/>
</dbReference>
<dbReference type="HOGENOM" id="CLU_006586_15_1_1"/>
<dbReference type="InParanoid" id="I1RIF1"/>
<dbReference type="OrthoDB" id="44680at110618"/>
<dbReference type="Proteomes" id="UP000070720">
    <property type="component" value="Chromosome 2"/>
</dbReference>
<dbReference type="GO" id="GO:0005576">
    <property type="term" value="C:extracellular region"/>
    <property type="evidence" value="ECO:0007669"/>
    <property type="project" value="UniProtKB-SubCell"/>
</dbReference>
<dbReference type="GO" id="GO:0016787">
    <property type="term" value="F:hydrolase activity"/>
    <property type="evidence" value="ECO:0007669"/>
    <property type="project" value="UniProtKB-KW"/>
</dbReference>
<dbReference type="GO" id="GO:0016042">
    <property type="term" value="P:lipid catabolic process"/>
    <property type="evidence" value="ECO:0007669"/>
    <property type="project" value="UniProtKB-KW"/>
</dbReference>
<dbReference type="Gene3D" id="3.40.50.1820">
    <property type="entry name" value="alpha/beta hydrolase"/>
    <property type="match status" value="1"/>
</dbReference>
<dbReference type="InterPro" id="IPR029058">
    <property type="entry name" value="AB_hydrolase_fold"/>
</dbReference>
<dbReference type="InterPro" id="IPR002018">
    <property type="entry name" value="CarbesteraseB"/>
</dbReference>
<dbReference type="InterPro" id="IPR019826">
    <property type="entry name" value="Carboxylesterase_B_AS"/>
</dbReference>
<dbReference type="InterPro" id="IPR050309">
    <property type="entry name" value="Type-B_Carboxylest/Lipase"/>
</dbReference>
<dbReference type="PANTHER" id="PTHR11559">
    <property type="entry name" value="CARBOXYLESTERASE"/>
    <property type="match status" value="1"/>
</dbReference>
<dbReference type="Pfam" id="PF00135">
    <property type="entry name" value="COesterase"/>
    <property type="match status" value="2"/>
</dbReference>
<dbReference type="SUPFAM" id="SSF53474">
    <property type="entry name" value="alpha/beta-Hydrolases"/>
    <property type="match status" value="1"/>
</dbReference>
<dbReference type="PROSITE" id="PS00122">
    <property type="entry name" value="CARBOXYLESTERASE_B_1"/>
    <property type="match status" value="1"/>
</dbReference>
<reference key="1">
    <citation type="journal article" date="2007" name="Science">
        <title>The Fusarium graminearum genome reveals a link between localized polymorphism and pathogen specialization.</title>
        <authorList>
            <person name="Cuomo C.A."/>
            <person name="Gueldener U."/>
            <person name="Xu J.-R."/>
            <person name="Trail F."/>
            <person name="Turgeon B.G."/>
            <person name="Di Pietro A."/>
            <person name="Walton J.D."/>
            <person name="Ma L.-J."/>
            <person name="Baker S.E."/>
            <person name="Rep M."/>
            <person name="Adam G."/>
            <person name="Antoniw J."/>
            <person name="Baldwin T."/>
            <person name="Calvo S.E."/>
            <person name="Chang Y.-L."/>
            <person name="DeCaprio D."/>
            <person name="Gale L.R."/>
            <person name="Gnerre S."/>
            <person name="Goswami R.S."/>
            <person name="Hammond-Kosack K."/>
            <person name="Harris L.J."/>
            <person name="Hilburn K."/>
            <person name="Kennell J.C."/>
            <person name="Kroken S."/>
            <person name="Magnuson J.K."/>
            <person name="Mannhaupt G."/>
            <person name="Mauceli E.W."/>
            <person name="Mewes H.-W."/>
            <person name="Mitterbauer R."/>
            <person name="Muehlbauer G."/>
            <person name="Muensterkoetter M."/>
            <person name="Nelson D."/>
            <person name="O'Donnell K."/>
            <person name="Ouellet T."/>
            <person name="Qi W."/>
            <person name="Quesneville H."/>
            <person name="Roncero M.I.G."/>
            <person name="Seong K.-Y."/>
            <person name="Tetko I.V."/>
            <person name="Urban M."/>
            <person name="Waalwijk C."/>
            <person name="Ward T.J."/>
            <person name="Yao J."/>
            <person name="Birren B.W."/>
            <person name="Kistler H.C."/>
        </authorList>
    </citation>
    <scope>NUCLEOTIDE SEQUENCE [LARGE SCALE GENOMIC DNA]</scope>
    <source>
        <strain>ATCC MYA-4620 / CBS 123657 / FGSC 9075 / NRRL 31084 / PH-1</strain>
    </source>
</reference>
<reference key="2">
    <citation type="journal article" date="2010" name="Nature">
        <title>Comparative genomics reveals mobile pathogenicity chromosomes in Fusarium.</title>
        <authorList>
            <person name="Ma L.-J."/>
            <person name="van der Does H.C."/>
            <person name="Borkovich K.A."/>
            <person name="Coleman J.J."/>
            <person name="Daboussi M.-J."/>
            <person name="Di Pietro A."/>
            <person name="Dufresne M."/>
            <person name="Freitag M."/>
            <person name="Grabherr M."/>
            <person name="Henrissat B."/>
            <person name="Houterman P.M."/>
            <person name="Kang S."/>
            <person name="Shim W.-B."/>
            <person name="Woloshuk C."/>
            <person name="Xie X."/>
            <person name="Xu J.-R."/>
            <person name="Antoniw J."/>
            <person name="Baker S.E."/>
            <person name="Bluhm B.H."/>
            <person name="Breakspear A."/>
            <person name="Brown D.W."/>
            <person name="Butchko R.A.E."/>
            <person name="Chapman S."/>
            <person name="Coulson R."/>
            <person name="Coutinho P.M."/>
            <person name="Danchin E.G.J."/>
            <person name="Diener A."/>
            <person name="Gale L.R."/>
            <person name="Gardiner D.M."/>
            <person name="Goff S."/>
            <person name="Hammond-Kosack K.E."/>
            <person name="Hilburn K."/>
            <person name="Hua-Van A."/>
            <person name="Jonkers W."/>
            <person name="Kazan K."/>
            <person name="Kodira C.D."/>
            <person name="Koehrsen M."/>
            <person name="Kumar L."/>
            <person name="Lee Y.-H."/>
            <person name="Li L."/>
            <person name="Manners J.M."/>
            <person name="Miranda-Saavedra D."/>
            <person name="Mukherjee M."/>
            <person name="Park G."/>
            <person name="Park J."/>
            <person name="Park S.-Y."/>
            <person name="Proctor R.H."/>
            <person name="Regev A."/>
            <person name="Ruiz-Roldan M.C."/>
            <person name="Sain D."/>
            <person name="Sakthikumar S."/>
            <person name="Sykes S."/>
            <person name="Schwartz D.C."/>
            <person name="Turgeon B.G."/>
            <person name="Wapinski I."/>
            <person name="Yoder O."/>
            <person name="Young S."/>
            <person name="Zeng Q."/>
            <person name="Zhou S."/>
            <person name="Galagan J."/>
            <person name="Cuomo C.A."/>
            <person name="Kistler H.C."/>
            <person name="Rep M."/>
        </authorList>
    </citation>
    <scope>GENOME REANNOTATION</scope>
    <source>
        <strain>ATCC MYA-4620 / CBS 123657 / FGSC 9075 / NRRL 31084 / PH-1</strain>
    </source>
</reference>
<reference key="3">
    <citation type="journal article" date="2015" name="BMC Genomics">
        <title>The completed genome sequence of the pathogenic ascomycete fungus Fusarium graminearum.</title>
        <authorList>
            <person name="King R."/>
            <person name="Urban M."/>
            <person name="Hammond-Kosack M.C.U."/>
            <person name="Hassani-Pak K."/>
            <person name="Hammond-Kosack K.E."/>
        </authorList>
    </citation>
    <scope>NUCLEOTIDE SEQUENCE [LARGE SCALE GENOMIC DNA]</scope>
    <source>
        <strain>ATCC MYA-4620 / CBS 123657 / FGSC 9075 / NRRL 31084 / PH-1</strain>
    </source>
</reference>
<reference key="4">
    <citation type="journal article" date="2010" name="Enzyme Microb. Technol.">
        <title>Enzymatic properties and expression patterns of five extracellular lipases of Fusarium graminearum in vitro.</title>
        <authorList>
            <person name="Nguyen L.N."/>
            <person name="Dao T.T."/>
            <person name="Zivkovic T."/>
            <person name="Fehrholz M."/>
            <person name="Schaefer W."/>
            <person name="Salomon S."/>
        </authorList>
    </citation>
    <scope>FUNCTION</scope>
    <scope>CATALYTIC ACTIVITY</scope>
    <scope>BIOPHYSICOCHEMICAL PROPERTIES</scope>
    <scope>SUBCELLULAR LOCATION</scope>
    <scope>INDUCTION</scope>
</reference>
<proteinExistence type="evidence at protein level"/>
<sequence>MHLKSLLLAALPLLLEASPTIKGEDTASLAINTSSGIFAPYFDRQQPNVASFLDIPYAETPIGNLRFAPPVEKKNAGDDIVHTTKLPAGCIQYLPALLRGTINDGPITAGTFQRGDYANTTEDCLKISLFAPEKSVRAKEGKKTQALPVIVWIHGGGYSVGGTNVPYQLAQNWVQRTQKHIVVQVQYRLNLLGFPNAEGLAREGNNLNLGLLDQRLAVEWVRNNIARFGGDPDRITLWGESAGGYAVDGYLFTWAQDPIIKGVIADSGNALALEGVVGDSRNHTGFSLAAKSMGCGGLLPKDELECMRHVPERNLKEYLQAEVGQGGAADDGLTVSVIADNITVFSNYTERISGNSAKYPANIPVLIGTNTNEGAAVVPYKFPGFETATELPDQLKPLADGFGLNLQCTTLKETRLRAEAGATTYQYLYAGNFTNISPLPWLGAYHTAELPLVFGTYETEGPSTKFERRMSERMQDLYLEFASDPSHGLEKSGWPRAESQPERSKLVKLAADNKVEQVFSAKKLVDECVQNGFAV</sequence>
<organism>
    <name type="scientific">Gibberella zeae (strain ATCC MYA-4620 / CBS 123657 / FGSC 9075 / NRRL 31084 / PH-1)</name>
    <name type="common">Wheat head blight fungus</name>
    <name type="synonym">Fusarium graminearum</name>
    <dbReference type="NCBI Taxonomy" id="229533"/>
    <lineage>
        <taxon>Eukaryota</taxon>
        <taxon>Fungi</taxon>
        <taxon>Dikarya</taxon>
        <taxon>Ascomycota</taxon>
        <taxon>Pezizomycotina</taxon>
        <taxon>Sordariomycetes</taxon>
        <taxon>Hypocreomycetidae</taxon>
        <taxon>Hypocreales</taxon>
        <taxon>Nectriaceae</taxon>
        <taxon>Fusarium</taxon>
    </lineage>
</organism>
<feature type="signal peptide" evidence="1">
    <location>
        <begin position="1"/>
        <end position="17"/>
    </location>
</feature>
<feature type="chain" id="PRO_5009997663" description="Secreted lipase 5" evidence="1">
    <location>
        <begin position="18"/>
        <end position="535"/>
    </location>
</feature>
<feature type="active site" description="Acyl-ester intermediate" evidence="3">
    <location>
        <position position="241"/>
    </location>
</feature>
<feature type="glycosylation site" description="N-linked (GlcNAc...) asparagine" evidence="2">
    <location>
        <position position="32"/>
    </location>
</feature>
<feature type="glycosylation site" description="N-linked (GlcNAc...) asparagine" evidence="2">
    <location>
        <position position="119"/>
    </location>
</feature>
<feature type="glycosylation site" description="N-linked (GlcNAc...) asparagine" evidence="2">
    <location>
        <position position="282"/>
    </location>
</feature>
<feature type="glycosylation site" description="N-linked (GlcNAc...) asparagine" evidence="2">
    <location>
        <position position="341"/>
    </location>
</feature>
<feature type="glycosylation site" description="N-linked (GlcNAc...) asparagine" evidence="2">
    <location>
        <position position="347"/>
    </location>
</feature>
<feature type="glycosylation site" description="N-linked (GlcNAc...) asparagine" evidence="2">
    <location>
        <position position="432"/>
    </location>
</feature>
<keyword id="KW-0325">Glycoprotein</keyword>
<keyword id="KW-0378">Hydrolase</keyword>
<keyword id="KW-0442">Lipid degradation</keyword>
<keyword id="KW-0443">Lipid metabolism</keyword>
<keyword id="KW-1185">Reference proteome</keyword>
<keyword id="KW-0964">Secreted</keyword>
<keyword id="KW-0732">Signal</keyword>
<protein>
    <recommendedName>
        <fullName evidence="5">Secreted lipase 5</fullName>
        <ecNumber evidence="4">3.1.1.1</ecNumber>
    </recommendedName>
</protein>
<gene>
    <name evidence="5" type="primary">LIP5</name>
    <name type="ORF">FG03583</name>
    <name type="ORF">FGRAMPH1_01T13219</name>
</gene>
<accession>I1RIF1</accession>
<accession>A0A098DHK4</accession>
<evidence type="ECO:0000255" key="1"/>
<evidence type="ECO:0000255" key="2">
    <source>
        <dbReference type="PROSITE-ProRule" id="PRU00498"/>
    </source>
</evidence>
<evidence type="ECO:0000255" key="3">
    <source>
        <dbReference type="PROSITE-ProRule" id="PRU10039"/>
    </source>
</evidence>
<evidence type="ECO:0000269" key="4">
    <source>
    </source>
</evidence>
<evidence type="ECO:0000303" key="5">
    <source>
    </source>
</evidence>
<evidence type="ECO:0000305" key="6"/>
<name>FGL5_GIBZE</name>
<comment type="function">
    <text evidence="4">Secreted lipase involved in plant virulence (PubMed:25919623). Has a substrate preference for p-nitrophenyl esters with a carbon chain length of C8 (p-nitrophenyl caprylate) (PubMed:25919623).</text>
</comment>
<comment type="catalytic activity">
    <reaction evidence="3">
        <text>a carboxylic ester + H2O = an alcohol + a carboxylate + H(+)</text>
        <dbReference type="Rhea" id="RHEA:21164"/>
        <dbReference type="ChEBI" id="CHEBI:15377"/>
        <dbReference type="ChEBI" id="CHEBI:15378"/>
        <dbReference type="ChEBI" id="CHEBI:29067"/>
        <dbReference type="ChEBI" id="CHEBI:30879"/>
        <dbReference type="ChEBI" id="CHEBI:33308"/>
        <dbReference type="EC" id="3.1.1.1"/>
    </reaction>
</comment>
<comment type="biophysicochemical properties">
    <phDependence>
        <text evidence="4">Optimum pH is 7.0.</text>
    </phDependence>
    <temperatureDependence>
        <text evidence="4">Optimum temperature is 35 to 38 degrees Celsius.</text>
    </temperatureDependence>
</comment>
<comment type="subcellular location">
    <subcellularLocation>
        <location evidence="4">Secreted</location>
    </subcellularLocation>
</comment>
<comment type="induction">
    <text evidence="4">Transcript accumulation reached its highest level in 4 hour old cultures.</text>
</comment>
<comment type="similarity">
    <text evidence="6">Belongs to the type-B carboxylesterase/lipase family.</text>
</comment>